<comment type="function">
    <text evidence="1">Site-specific tyrosine recombinase, which acts by catalyzing the cutting and rejoining of the recombining DNA molecules. Binds cooperatively to specific DNA consensus sequences that are separated from XerD binding sites by a short central region, forming the heterotetrameric XerC-XerD complex that recombines DNA substrates. The complex is essential to convert dimers of the bacterial chromosome into monomers to permit their segregation at cell division. It also contributes to the segregational stability of plasmids. In the complex XerC specifically exchanges the top DNA strands.</text>
</comment>
<comment type="activity regulation">
    <text evidence="1">FtsK may regulate the catalytic switch between XerC and XerD in the heterotetrameric complex during the two steps of the recombination process.</text>
</comment>
<comment type="subunit">
    <text evidence="1">Forms a cyclic heterotetrameric complex composed of two molecules of XerC and two molecules of XerD, in which XerC interacts with XerD via its C-terminal region, XerD interacts with XerC via its C-terminal region and so on.</text>
</comment>
<comment type="subcellular location">
    <subcellularLocation>
        <location evidence="1">Cytoplasm</location>
    </subcellularLocation>
</comment>
<comment type="similarity">
    <text evidence="1">Belongs to the 'phage' integrase family. XerC subfamily.</text>
</comment>
<feature type="chain" id="PRO_1000187588" description="Tyrosine recombinase XerC">
    <location>
        <begin position="1"/>
        <end position="298"/>
    </location>
</feature>
<feature type="domain" description="Core-binding (CB)" evidence="3">
    <location>
        <begin position="2"/>
        <end position="88"/>
    </location>
</feature>
<feature type="domain" description="Tyr recombinase" evidence="2">
    <location>
        <begin position="109"/>
        <end position="288"/>
    </location>
</feature>
<feature type="active site" evidence="1">
    <location>
        <position position="148"/>
    </location>
</feature>
<feature type="active site" evidence="1">
    <location>
        <position position="172"/>
    </location>
</feature>
<feature type="active site" evidence="1">
    <location>
        <position position="240"/>
    </location>
</feature>
<feature type="active site" evidence="1">
    <location>
        <position position="243"/>
    </location>
</feature>
<feature type="active site" evidence="1">
    <location>
        <position position="266"/>
    </location>
</feature>
<feature type="active site" description="O-(3'-phospho-DNA)-tyrosine intermediate" evidence="1">
    <location>
        <position position="275"/>
    </location>
</feature>
<proteinExistence type="inferred from homology"/>
<keyword id="KW-0131">Cell cycle</keyword>
<keyword id="KW-0132">Cell division</keyword>
<keyword id="KW-0159">Chromosome partition</keyword>
<keyword id="KW-0963">Cytoplasm</keyword>
<keyword id="KW-0229">DNA integration</keyword>
<keyword id="KW-0233">DNA recombination</keyword>
<keyword id="KW-0238">DNA-binding</keyword>
<keyword id="KW-1185">Reference proteome</keyword>
<sequence length="298" mass="33891">MTDLHTDVERYLRYLSVERQLSPITLLNYQRQLEAIIHFASENGLQSWQQCDVTMVRNFAVRSRRKGLGAASLALRLSALRSFFDWLVSQNELKANPAKGVSAPKAPRHLPKNIDVDDMNRLLDIDINDPLAVRDRAMLEVMYGAGLRLSELVGLDIKHLDLESGEVWVMGKGSKERRLPIGRNAVAWIEHWLDLRDLFGSEDDALFLSKLGKRISARNVQKRFAEWGIKQGLNNHVHPHKLRHSFATHMLESSGDLRGVQELLGHANLSTTQIYTHLDFQHLASVYDAAHPRAKRGK</sequence>
<evidence type="ECO:0000255" key="1">
    <source>
        <dbReference type="HAMAP-Rule" id="MF_01808"/>
    </source>
</evidence>
<evidence type="ECO:0000255" key="2">
    <source>
        <dbReference type="PROSITE-ProRule" id="PRU01246"/>
    </source>
</evidence>
<evidence type="ECO:0000255" key="3">
    <source>
        <dbReference type="PROSITE-ProRule" id="PRU01248"/>
    </source>
</evidence>
<name>XERC_ECO45</name>
<accession>B7MH75</accession>
<gene>
    <name evidence="1" type="primary">xerC</name>
    <name type="ordered locus">ECS88_4237</name>
</gene>
<reference key="1">
    <citation type="journal article" date="2009" name="PLoS Genet.">
        <title>Organised genome dynamics in the Escherichia coli species results in highly diverse adaptive paths.</title>
        <authorList>
            <person name="Touchon M."/>
            <person name="Hoede C."/>
            <person name="Tenaillon O."/>
            <person name="Barbe V."/>
            <person name="Baeriswyl S."/>
            <person name="Bidet P."/>
            <person name="Bingen E."/>
            <person name="Bonacorsi S."/>
            <person name="Bouchier C."/>
            <person name="Bouvet O."/>
            <person name="Calteau A."/>
            <person name="Chiapello H."/>
            <person name="Clermont O."/>
            <person name="Cruveiller S."/>
            <person name="Danchin A."/>
            <person name="Diard M."/>
            <person name="Dossat C."/>
            <person name="Karoui M.E."/>
            <person name="Frapy E."/>
            <person name="Garry L."/>
            <person name="Ghigo J.M."/>
            <person name="Gilles A.M."/>
            <person name="Johnson J."/>
            <person name="Le Bouguenec C."/>
            <person name="Lescat M."/>
            <person name="Mangenot S."/>
            <person name="Martinez-Jehanne V."/>
            <person name="Matic I."/>
            <person name="Nassif X."/>
            <person name="Oztas S."/>
            <person name="Petit M.A."/>
            <person name="Pichon C."/>
            <person name="Rouy Z."/>
            <person name="Ruf C.S."/>
            <person name="Schneider D."/>
            <person name="Tourret J."/>
            <person name="Vacherie B."/>
            <person name="Vallenet D."/>
            <person name="Medigue C."/>
            <person name="Rocha E.P.C."/>
            <person name="Denamur E."/>
        </authorList>
    </citation>
    <scope>NUCLEOTIDE SEQUENCE [LARGE SCALE GENOMIC DNA]</scope>
    <source>
        <strain>S88 / ExPEC</strain>
    </source>
</reference>
<organism>
    <name type="scientific">Escherichia coli O45:K1 (strain S88 / ExPEC)</name>
    <dbReference type="NCBI Taxonomy" id="585035"/>
    <lineage>
        <taxon>Bacteria</taxon>
        <taxon>Pseudomonadati</taxon>
        <taxon>Pseudomonadota</taxon>
        <taxon>Gammaproteobacteria</taxon>
        <taxon>Enterobacterales</taxon>
        <taxon>Enterobacteriaceae</taxon>
        <taxon>Escherichia</taxon>
    </lineage>
</organism>
<protein>
    <recommendedName>
        <fullName evidence="1">Tyrosine recombinase XerC</fullName>
    </recommendedName>
</protein>
<dbReference type="EMBL" id="CU928161">
    <property type="protein sequence ID" value="CAR05429.1"/>
    <property type="molecule type" value="Genomic_DNA"/>
</dbReference>
<dbReference type="RefSeq" id="WP_000130676.1">
    <property type="nucleotide sequence ID" value="NC_011742.1"/>
</dbReference>
<dbReference type="SMR" id="B7MH75"/>
<dbReference type="KEGG" id="ecz:ECS88_4237"/>
<dbReference type="HOGENOM" id="CLU_027562_9_0_6"/>
<dbReference type="Proteomes" id="UP000000747">
    <property type="component" value="Chromosome"/>
</dbReference>
<dbReference type="GO" id="GO:0005737">
    <property type="term" value="C:cytoplasm"/>
    <property type="evidence" value="ECO:0007669"/>
    <property type="project" value="UniProtKB-SubCell"/>
</dbReference>
<dbReference type="GO" id="GO:0003677">
    <property type="term" value="F:DNA binding"/>
    <property type="evidence" value="ECO:0007669"/>
    <property type="project" value="UniProtKB-KW"/>
</dbReference>
<dbReference type="GO" id="GO:0009037">
    <property type="term" value="F:tyrosine-based site-specific recombinase activity"/>
    <property type="evidence" value="ECO:0007669"/>
    <property type="project" value="UniProtKB-UniRule"/>
</dbReference>
<dbReference type="GO" id="GO:0051301">
    <property type="term" value="P:cell division"/>
    <property type="evidence" value="ECO:0007669"/>
    <property type="project" value="UniProtKB-KW"/>
</dbReference>
<dbReference type="GO" id="GO:0007059">
    <property type="term" value="P:chromosome segregation"/>
    <property type="evidence" value="ECO:0007669"/>
    <property type="project" value="UniProtKB-UniRule"/>
</dbReference>
<dbReference type="GO" id="GO:0006313">
    <property type="term" value="P:DNA transposition"/>
    <property type="evidence" value="ECO:0007669"/>
    <property type="project" value="UniProtKB-UniRule"/>
</dbReference>
<dbReference type="CDD" id="cd00798">
    <property type="entry name" value="INT_XerDC_C"/>
    <property type="match status" value="1"/>
</dbReference>
<dbReference type="FunFam" id="1.10.443.10:FF:000002">
    <property type="entry name" value="Tyrosine recombinase XerC"/>
    <property type="match status" value="1"/>
</dbReference>
<dbReference type="Gene3D" id="1.10.150.130">
    <property type="match status" value="1"/>
</dbReference>
<dbReference type="Gene3D" id="1.10.443.10">
    <property type="entry name" value="Intergrase catalytic core"/>
    <property type="match status" value="1"/>
</dbReference>
<dbReference type="HAMAP" id="MF_01808">
    <property type="entry name" value="Recomb_XerC_XerD"/>
    <property type="match status" value="1"/>
</dbReference>
<dbReference type="InterPro" id="IPR044068">
    <property type="entry name" value="CB"/>
</dbReference>
<dbReference type="InterPro" id="IPR011010">
    <property type="entry name" value="DNA_brk_join_enz"/>
</dbReference>
<dbReference type="InterPro" id="IPR013762">
    <property type="entry name" value="Integrase-like_cat_sf"/>
</dbReference>
<dbReference type="InterPro" id="IPR002104">
    <property type="entry name" value="Integrase_catalytic"/>
</dbReference>
<dbReference type="InterPro" id="IPR010998">
    <property type="entry name" value="Integrase_recombinase_N"/>
</dbReference>
<dbReference type="InterPro" id="IPR004107">
    <property type="entry name" value="Integrase_SAM-like_N"/>
</dbReference>
<dbReference type="InterPro" id="IPR011931">
    <property type="entry name" value="Recomb_XerC"/>
</dbReference>
<dbReference type="InterPro" id="IPR023009">
    <property type="entry name" value="Tyrosine_recombinase_XerC/XerD"/>
</dbReference>
<dbReference type="InterPro" id="IPR050090">
    <property type="entry name" value="Tyrosine_recombinase_XerCD"/>
</dbReference>
<dbReference type="NCBIfam" id="NF001399">
    <property type="entry name" value="PRK00283.1"/>
    <property type="match status" value="1"/>
</dbReference>
<dbReference type="NCBIfam" id="TIGR02224">
    <property type="entry name" value="recomb_XerC"/>
    <property type="match status" value="1"/>
</dbReference>
<dbReference type="PANTHER" id="PTHR30349">
    <property type="entry name" value="PHAGE INTEGRASE-RELATED"/>
    <property type="match status" value="1"/>
</dbReference>
<dbReference type="PANTHER" id="PTHR30349:SF81">
    <property type="entry name" value="TYROSINE RECOMBINASE XERC"/>
    <property type="match status" value="1"/>
</dbReference>
<dbReference type="Pfam" id="PF02899">
    <property type="entry name" value="Phage_int_SAM_1"/>
    <property type="match status" value="1"/>
</dbReference>
<dbReference type="Pfam" id="PF00589">
    <property type="entry name" value="Phage_integrase"/>
    <property type="match status" value="1"/>
</dbReference>
<dbReference type="SUPFAM" id="SSF56349">
    <property type="entry name" value="DNA breaking-rejoining enzymes"/>
    <property type="match status" value="1"/>
</dbReference>
<dbReference type="SUPFAM" id="SSF47823">
    <property type="entry name" value="lambda integrase-like, N-terminal domain"/>
    <property type="match status" value="1"/>
</dbReference>
<dbReference type="PROSITE" id="PS51900">
    <property type="entry name" value="CB"/>
    <property type="match status" value="1"/>
</dbReference>
<dbReference type="PROSITE" id="PS51898">
    <property type="entry name" value="TYR_RECOMBINASE"/>
    <property type="match status" value="1"/>
</dbReference>